<accession>Q9ASS7</accession>
<accession>Q8H182</accession>
<organism>
    <name type="scientific">Arabidopsis thaliana</name>
    <name type="common">Mouse-ear cress</name>
    <dbReference type="NCBI Taxonomy" id="3702"/>
    <lineage>
        <taxon>Eukaryota</taxon>
        <taxon>Viridiplantae</taxon>
        <taxon>Streptophyta</taxon>
        <taxon>Embryophyta</taxon>
        <taxon>Tracheophyta</taxon>
        <taxon>Spermatophyta</taxon>
        <taxon>Magnoliopsida</taxon>
        <taxon>eudicotyledons</taxon>
        <taxon>Gunneridae</taxon>
        <taxon>Pentapetalae</taxon>
        <taxon>rosids</taxon>
        <taxon>malvids</taxon>
        <taxon>Brassicales</taxon>
        <taxon>Brassicaceae</taxon>
        <taxon>Camelineae</taxon>
        <taxon>Arabidopsis</taxon>
    </lineage>
</organism>
<comment type="function">
    <text evidence="1">Permease involved in the transport of the cationic amino acids.</text>
</comment>
<comment type="subcellular location">
    <subcellularLocation>
        <location evidence="3 4">Vacuole membrane</location>
        <topology evidence="3 4">Multi-pass membrane protein</topology>
    </subcellularLocation>
</comment>
<comment type="tissue specificity">
    <text evidence="3">Expressed in roots, stems, flowers, leaves, and siliques.</text>
</comment>
<comment type="similarity">
    <text evidence="5">Belongs to the amino acid-polyamine-organocation (APC) superfamily. Cationic amino acid transporter (CAT) (TC 2.A.3.3) family.</text>
</comment>
<keyword id="KW-0029">Amino-acid transport</keyword>
<keyword id="KW-0472">Membrane</keyword>
<keyword id="KW-1185">Reference proteome</keyword>
<keyword id="KW-0812">Transmembrane</keyword>
<keyword id="KW-1133">Transmembrane helix</keyword>
<keyword id="KW-0813">Transport</keyword>
<keyword id="KW-0926">Vacuole</keyword>
<reference key="1">
    <citation type="journal article" date="2000" name="Nature">
        <title>Sequence and analysis of chromosome 1 of the plant Arabidopsis thaliana.</title>
        <authorList>
            <person name="Theologis A."/>
            <person name="Ecker J.R."/>
            <person name="Palm C.J."/>
            <person name="Federspiel N.A."/>
            <person name="Kaul S."/>
            <person name="White O."/>
            <person name="Alonso J."/>
            <person name="Altafi H."/>
            <person name="Araujo R."/>
            <person name="Bowman C.L."/>
            <person name="Brooks S.Y."/>
            <person name="Buehler E."/>
            <person name="Chan A."/>
            <person name="Chao Q."/>
            <person name="Chen H."/>
            <person name="Cheuk R.F."/>
            <person name="Chin C.W."/>
            <person name="Chung M.K."/>
            <person name="Conn L."/>
            <person name="Conway A.B."/>
            <person name="Conway A.R."/>
            <person name="Creasy T.H."/>
            <person name="Dewar K."/>
            <person name="Dunn P."/>
            <person name="Etgu P."/>
            <person name="Feldblyum T.V."/>
            <person name="Feng J.-D."/>
            <person name="Fong B."/>
            <person name="Fujii C.Y."/>
            <person name="Gill J.E."/>
            <person name="Goldsmith A.D."/>
            <person name="Haas B."/>
            <person name="Hansen N.F."/>
            <person name="Hughes B."/>
            <person name="Huizar L."/>
            <person name="Hunter J.L."/>
            <person name="Jenkins J."/>
            <person name="Johnson-Hopson C."/>
            <person name="Khan S."/>
            <person name="Khaykin E."/>
            <person name="Kim C.J."/>
            <person name="Koo H.L."/>
            <person name="Kremenetskaia I."/>
            <person name="Kurtz D.B."/>
            <person name="Kwan A."/>
            <person name="Lam B."/>
            <person name="Langin-Hooper S."/>
            <person name="Lee A."/>
            <person name="Lee J.M."/>
            <person name="Lenz C.A."/>
            <person name="Li J.H."/>
            <person name="Li Y.-P."/>
            <person name="Lin X."/>
            <person name="Liu S.X."/>
            <person name="Liu Z.A."/>
            <person name="Luros J.S."/>
            <person name="Maiti R."/>
            <person name="Marziali A."/>
            <person name="Militscher J."/>
            <person name="Miranda M."/>
            <person name="Nguyen M."/>
            <person name="Nierman W.C."/>
            <person name="Osborne B.I."/>
            <person name="Pai G."/>
            <person name="Peterson J."/>
            <person name="Pham P.K."/>
            <person name="Rizzo M."/>
            <person name="Rooney T."/>
            <person name="Rowley D."/>
            <person name="Sakano H."/>
            <person name="Salzberg S.L."/>
            <person name="Schwartz J.R."/>
            <person name="Shinn P."/>
            <person name="Southwick A.M."/>
            <person name="Sun H."/>
            <person name="Tallon L.J."/>
            <person name="Tambunga G."/>
            <person name="Toriumi M.J."/>
            <person name="Town C.D."/>
            <person name="Utterback T."/>
            <person name="Van Aken S."/>
            <person name="Vaysberg M."/>
            <person name="Vysotskaia V.S."/>
            <person name="Walker M."/>
            <person name="Wu D."/>
            <person name="Yu G."/>
            <person name="Fraser C.M."/>
            <person name="Venter J.C."/>
            <person name="Davis R.W."/>
        </authorList>
    </citation>
    <scope>NUCLEOTIDE SEQUENCE [LARGE SCALE GENOMIC DNA]</scope>
    <source>
        <strain>cv. Columbia</strain>
    </source>
</reference>
<reference key="2">
    <citation type="journal article" date="2017" name="Plant J.">
        <title>Araport11: a complete reannotation of the Arabidopsis thaliana reference genome.</title>
        <authorList>
            <person name="Cheng C.Y."/>
            <person name="Krishnakumar V."/>
            <person name="Chan A.P."/>
            <person name="Thibaud-Nissen F."/>
            <person name="Schobel S."/>
            <person name="Town C.D."/>
        </authorList>
    </citation>
    <scope>GENOME REANNOTATION</scope>
    <source>
        <strain>cv. Columbia</strain>
    </source>
</reference>
<reference key="3">
    <citation type="journal article" date="2003" name="Science">
        <title>Empirical analysis of transcriptional activity in the Arabidopsis genome.</title>
        <authorList>
            <person name="Yamada K."/>
            <person name="Lim J."/>
            <person name="Dale J.M."/>
            <person name="Chen H."/>
            <person name="Shinn P."/>
            <person name="Palm C.J."/>
            <person name="Southwick A.M."/>
            <person name="Wu H.C."/>
            <person name="Kim C.J."/>
            <person name="Nguyen M."/>
            <person name="Pham P.K."/>
            <person name="Cheuk R.F."/>
            <person name="Karlin-Newmann G."/>
            <person name="Liu S.X."/>
            <person name="Lam B."/>
            <person name="Sakano H."/>
            <person name="Wu T."/>
            <person name="Yu G."/>
            <person name="Miranda M."/>
            <person name="Quach H.L."/>
            <person name="Tripp M."/>
            <person name="Chang C.H."/>
            <person name="Lee J.M."/>
            <person name="Toriumi M.J."/>
            <person name="Chan M.M."/>
            <person name="Tang C.C."/>
            <person name="Onodera C.S."/>
            <person name="Deng J.M."/>
            <person name="Akiyama K."/>
            <person name="Ansari Y."/>
            <person name="Arakawa T."/>
            <person name="Banh J."/>
            <person name="Banno F."/>
            <person name="Bowser L."/>
            <person name="Brooks S.Y."/>
            <person name="Carninci P."/>
            <person name="Chao Q."/>
            <person name="Choy N."/>
            <person name="Enju A."/>
            <person name="Goldsmith A.D."/>
            <person name="Gurjal M."/>
            <person name="Hansen N.F."/>
            <person name="Hayashizaki Y."/>
            <person name="Johnson-Hopson C."/>
            <person name="Hsuan V.W."/>
            <person name="Iida K."/>
            <person name="Karnes M."/>
            <person name="Khan S."/>
            <person name="Koesema E."/>
            <person name="Ishida J."/>
            <person name="Jiang P.X."/>
            <person name="Jones T."/>
            <person name="Kawai J."/>
            <person name="Kamiya A."/>
            <person name="Meyers C."/>
            <person name="Nakajima M."/>
            <person name="Narusaka M."/>
            <person name="Seki M."/>
            <person name="Sakurai T."/>
            <person name="Satou M."/>
            <person name="Tamse R."/>
            <person name="Vaysberg M."/>
            <person name="Wallender E.K."/>
            <person name="Wong C."/>
            <person name="Yamamura Y."/>
            <person name="Yuan S."/>
            <person name="Shinozaki K."/>
            <person name="Davis R.W."/>
            <person name="Theologis A."/>
            <person name="Ecker J.R."/>
        </authorList>
    </citation>
    <scope>NUCLEOTIDE SEQUENCE [LARGE SCALE MRNA]</scope>
    <source>
        <strain>cv. Columbia</strain>
    </source>
</reference>
<reference key="4">
    <citation type="submission" date="2008-10" db="EMBL/GenBank/DDBJ databases">
        <title>Arabidopsis ORF clones.</title>
        <authorList>
            <person name="de los Reyes C."/>
            <person name="Quan R."/>
            <person name="Chen H."/>
            <person name="Bautista V."/>
            <person name="Kim C.J."/>
            <person name="Ecker J.R."/>
        </authorList>
    </citation>
    <scope>NUCLEOTIDE SEQUENCE [LARGE SCALE MRNA]</scope>
    <source>
        <strain>cv. Columbia</strain>
    </source>
</reference>
<reference key="5">
    <citation type="journal article" date="2004" name="Plant Physiol.">
        <title>Molecular and functional characterization of a family of amino acid transporters from Arabidopsis.</title>
        <authorList>
            <person name="Su Y.-H."/>
            <person name="Frommer W.B."/>
            <person name="Ludewig U."/>
        </authorList>
    </citation>
    <scope>SUBCELLULAR LOCATION</scope>
    <scope>TISSUE SPECIFICITY</scope>
    <scope>GENE FAMILY</scope>
    <scope>NOMENCLATURE</scope>
    <source>
        <strain>cv. Columbia</strain>
    </source>
</reference>
<reference key="6">
    <citation type="journal article" date="2007" name="Mol. Cell. Proteomics">
        <title>A proteomics dissection of Arabidopsis thaliana vacuoles isolated from cell culture.</title>
        <authorList>
            <person name="Jaquinod M."/>
            <person name="Villiers F."/>
            <person name="Kieffer-Jaquinod S."/>
            <person name="Hugouvieux V."/>
            <person name="Bruley C."/>
            <person name="Garin J."/>
            <person name="Bourguignon J."/>
        </authorList>
    </citation>
    <scope>IDENTIFICATION BY MASS SPECTROMETRY</scope>
    <scope>SUBCELLULAR LOCATION [LARGE SCALE ANALYSIS]</scope>
</reference>
<proteinExistence type="evidence at protein level"/>
<protein>
    <recommendedName>
        <fullName>Cationic amino acid transporter 2, vacuolar</fullName>
    </recommendedName>
</protein>
<evidence type="ECO:0000250" key="1"/>
<evidence type="ECO:0000255" key="2"/>
<evidence type="ECO:0000269" key="3">
    <source>
    </source>
</evidence>
<evidence type="ECO:0000269" key="4">
    <source>
    </source>
</evidence>
<evidence type="ECO:0000305" key="5"/>
<name>CAAT2_ARATH</name>
<gene>
    <name type="primary">CAT2</name>
    <name type="ordered locus">At1g58030</name>
    <name type="ORF">T15M6</name>
</gene>
<dbReference type="EMBL" id="AC079604">
    <property type="status" value="NOT_ANNOTATED_CDS"/>
    <property type="molecule type" value="Genomic_DNA"/>
</dbReference>
<dbReference type="EMBL" id="CP002684">
    <property type="protein sequence ID" value="AEE33488.1"/>
    <property type="molecule type" value="Genomic_DNA"/>
</dbReference>
<dbReference type="EMBL" id="AF367304">
    <property type="protein sequence ID" value="AAK32891.1"/>
    <property type="molecule type" value="mRNA"/>
</dbReference>
<dbReference type="EMBL" id="BT000457">
    <property type="protein sequence ID" value="AAN17434.1"/>
    <property type="molecule type" value="mRNA"/>
</dbReference>
<dbReference type="EMBL" id="BT046174">
    <property type="protein sequence ID" value="ACI49773.1"/>
    <property type="molecule type" value="mRNA"/>
</dbReference>
<dbReference type="RefSeq" id="NP_849822.1">
    <property type="nucleotide sequence ID" value="NM_179491.3"/>
</dbReference>
<dbReference type="SMR" id="Q9ASS7"/>
<dbReference type="FunCoup" id="Q9ASS7">
    <property type="interactions" value="930"/>
</dbReference>
<dbReference type="STRING" id="3702.Q9ASS7"/>
<dbReference type="TCDB" id="2.A.3.3.13">
    <property type="family name" value="the amino acid-polyamine-organocation (apc) family"/>
</dbReference>
<dbReference type="GlyGen" id="Q9ASS7">
    <property type="glycosylation" value="1 site"/>
</dbReference>
<dbReference type="PaxDb" id="3702-AT1G58030.1"/>
<dbReference type="ProteomicsDB" id="239122"/>
<dbReference type="EnsemblPlants" id="AT1G58030.1">
    <property type="protein sequence ID" value="AT1G58030.1"/>
    <property type="gene ID" value="AT1G58030"/>
</dbReference>
<dbReference type="GeneID" id="842170"/>
<dbReference type="Gramene" id="AT1G58030.1">
    <property type="protein sequence ID" value="AT1G58030.1"/>
    <property type="gene ID" value="AT1G58030"/>
</dbReference>
<dbReference type="KEGG" id="ath:AT1G58030"/>
<dbReference type="Araport" id="AT1G58030"/>
<dbReference type="TAIR" id="AT1G58030">
    <property type="gene designation" value="CAT2"/>
</dbReference>
<dbReference type="eggNOG" id="KOG1286">
    <property type="taxonomic scope" value="Eukaryota"/>
</dbReference>
<dbReference type="HOGENOM" id="CLU_007946_15_1_1"/>
<dbReference type="InParanoid" id="Q9ASS7"/>
<dbReference type="OMA" id="LMFGWAP"/>
<dbReference type="PhylomeDB" id="Q9ASS7"/>
<dbReference type="PRO" id="PR:Q9ASS7"/>
<dbReference type="Proteomes" id="UP000006548">
    <property type="component" value="Chromosome 1"/>
</dbReference>
<dbReference type="ExpressionAtlas" id="Q9ASS7">
    <property type="expression patterns" value="baseline and differential"/>
</dbReference>
<dbReference type="GO" id="GO:0000325">
    <property type="term" value="C:plant-type vacuole"/>
    <property type="evidence" value="ECO:0007005"/>
    <property type="project" value="TAIR"/>
</dbReference>
<dbReference type="GO" id="GO:0009705">
    <property type="term" value="C:plant-type vacuole membrane"/>
    <property type="evidence" value="ECO:0000314"/>
    <property type="project" value="TAIR"/>
</dbReference>
<dbReference type="GO" id="GO:0022857">
    <property type="term" value="F:transmembrane transporter activity"/>
    <property type="evidence" value="ECO:0007669"/>
    <property type="project" value="InterPro"/>
</dbReference>
<dbReference type="GO" id="GO:0006865">
    <property type="term" value="P:amino acid transport"/>
    <property type="evidence" value="ECO:0007669"/>
    <property type="project" value="UniProtKB-KW"/>
</dbReference>
<dbReference type="GO" id="GO:0080144">
    <property type="term" value="P:intracellular amino acid homeostasis"/>
    <property type="evidence" value="ECO:0000315"/>
    <property type="project" value="TAIR"/>
</dbReference>
<dbReference type="FunFam" id="1.20.1740.10:FF:000010">
    <property type="entry name" value="probable cationic amino acid transporter"/>
    <property type="match status" value="1"/>
</dbReference>
<dbReference type="Gene3D" id="1.20.1740.10">
    <property type="entry name" value="Amino acid/polyamine transporter I"/>
    <property type="match status" value="2"/>
</dbReference>
<dbReference type="InterPro" id="IPR002293">
    <property type="entry name" value="AA/rel_permease1"/>
</dbReference>
<dbReference type="InterPro" id="IPR029485">
    <property type="entry name" value="CAT_C"/>
</dbReference>
<dbReference type="PANTHER" id="PTHR43243:SF4">
    <property type="entry name" value="CATIONIC AMINO ACID TRANSPORTER 4"/>
    <property type="match status" value="1"/>
</dbReference>
<dbReference type="PANTHER" id="PTHR43243">
    <property type="entry name" value="INNER MEMBRANE TRANSPORTER YGJI-RELATED"/>
    <property type="match status" value="1"/>
</dbReference>
<dbReference type="Pfam" id="PF13520">
    <property type="entry name" value="AA_permease_2"/>
    <property type="match status" value="1"/>
</dbReference>
<dbReference type="Pfam" id="PF13906">
    <property type="entry name" value="AA_permease_C"/>
    <property type="match status" value="1"/>
</dbReference>
<dbReference type="PIRSF" id="PIRSF006060">
    <property type="entry name" value="AA_transporter"/>
    <property type="match status" value="1"/>
</dbReference>
<sequence>MGFLVDTQKEGGGHSWGYVRSLVRRKQVDSANGQSHGHQLARALTVPHLVAIGVGATIGAGVYILVGTVAREHSGPSLALSFLIAGIAAGLSAFCYAELSSRCPSAGSAYHYSYICVGEGVAWIIGWALILEYTIGGSAVARGISPNLALIFGGEDGLPAILARHQIPGLDIVVDPCAAILVFVVTGLLCMGIKESTFAQGIVTAVNVCVLLFVIVAGSYLGFKTGWPGYELPTGFFPFGVDGMFAGSATVFFAFIGFDSVASTAEEVRNPQRDLPIGIGLALLLCCSLYMMVSIVIVGLIPYYAMDPDTPISSAFASHDMQWAVYLITLGAVMALCSALMGALLPQPRILMAMARDGLLPSIFSDINKRTQVPVKATVATGLCAATLAFFMDVSQLAGMVSVGTLLAFTMVAISVLILRYVPPDEQPLPSSLQERIDSVSFICGETTSSGHVGTSDSSHQPLIVNNDALVDVPLIKNQEALGCLVLSEETRRIVAGWSIMFTCVGAFLLSYAASSLSFPGLIRYPLCGVGGCLLLAGLIALSSIDQDDARHTFGHSGGYMCPFVPLLPIICILINMYLLVNLGSATWARVSVWLLIGVIVYVFYGRKNSSLANAVYVTTAHAEEIYREHEGSLA</sequence>
<feature type="chain" id="PRO_0000415778" description="Cationic amino acid transporter 2, vacuolar">
    <location>
        <begin position="1"/>
        <end position="635"/>
    </location>
</feature>
<feature type="topological domain" description="Cytoplasmic" evidence="2">
    <location>
        <begin position="1"/>
        <end position="48"/>
    </location>
</feature>
<feature type="transmembrane region" description="Helical" evidence="2">
    <location>
        <begin position="49"/>
        <end position="69"/>
    </location>
</feature>
<feature type="topological domain" description="Vacuolar" evidence="2">
    <location>
        <begin position="70"/>
        <end position="76"/>
    </location>
</feature>
<feature type="transmembrane region" description="Helical" evidence="2">
    <location>
        <begin position="77"/>
        <end position="97"/>
    </location>
</feature>
<feature type="topological domain" description="Cytoplasmic" evidence="2">
    <location>
        <begin position="98"/>
        <end position="108"/>
    </location>
</feature>
<feature type="transmembrane region" description="Helical" evidence="2">
    <location>
        <begin position="109"/>
        <end position="131"/>
    </location>
</feature>
<feature type="topological domain" description="Vacuolar" evidence="2">
    <location>
        <begin position="132"/>
        <end position="171"/>
    </location>
</feature>
<feature type="transmembrane region" description="Helical" evidence="2">
    <location>
        <begin position="172"/>
        <end position="192"/>
    </location>
</feature>
<feature type="topological domain" description="Cytoplasmic" evidence="2">
    <location>
        <begin position="193"/>
        <end position="200"/>
    </location>
</feature>
<feature type="transmembrane region" description="Helical" evidence="2">
    <location>
        <begin position="201"/>
        <end position="221"/>
    </location>
</feature>
<feature type="topological domain" description="Vacuolar" evidence="2">
    <location>
        <begin position="222"/>
        <end position="235"/>
    </location>
</feature>
<feature type="transmembrane region" description="Helical" evidence="2">
    <location>
        <begin position="236"/>
        <end position="256"/>
    </location>
</feature>
<feature type="topological domain" description="Cytoplasmic" evidence="2">
    <location>
        <begin position="257"/>
        <end position="280"/>
    </location>
</feature>
<feature type="transmembrane region" description="Helical" evidence="2">
    <location>
        <begin position="281"/>
        <end position="301"/>
    </location>
</feature>
<feature type="topological domain" description="Vacuolar" evidence="2">
    <location>
        <begin position="302"/>
        <end position="324"/>
    </location>
</feature>
<feature type="transmembrane region" description="Helical" evidence="2">
    <location>
        <begin position="325"/>
        <end position="345"/>
    </location>
</feature>
<feature type="topological domain" description="Cytoplasmic" evidence="2">
    <location>
        <begin position="346"/>
        <end position="376"/>
    </location>
</feature>
<feature type="transmembrane region" description="Helical" evidence="2">
    <location>
        <begin position="377"/>
        <end position="397"/>
    </location>
</feature>
<feature type="topological domain" description="Vacuolar" evidence="2">
    <location>
        <position position="398"/>
    </location>
</feature>
<feature type="transmembrane region" description="Helical" evidence="2">
    <location>
        <begin position="399"/>
        <end position="419"/>
    </location>
</feature>
<feature type="topological domain" description="Cytoplasmic" evidence="2">
    <location>
        <begin position="420"/>
        <end position="493"/>
    </location>
</feature>
<feature type="transmembrane region" description="Helical" evidence="2">
    <location>
        <begin position="494"/>
        <end position="514"/>
    </location>
</feature>
<feature type="topological domain" description="Vacuolar" evidence="2">
    <location>
        <begin position="515"/>
        <end position="524"/>
    </location>
</feature>
<feature type="transmembrane region" description="Helical" evidence="2">
    <location>
        <begin position="525"/>
        <end position="545"/>
    </location>
</feature>
<feature type="topological domain" description="Cytoplasmic" evidence="2">
    <location>
        <begin position="546"/>
        <end position="560"/>
    </location>
</feature>
<feature type="transmembrane region" description="Helical" evidence="2">
    <location>
        <begin position="561"/>
        <end position="581"/>
    </location>
</feature>
<feature type="topological domain" description="Vacuolar" evidence="2">
    <location>
        <begin position="582"/>
        <end position="585"/>
    </location>
</feature>
<feature type="transmembrane region" description="Helical" evidence="2">
    <location>
        <begin position="586"/>
        <end position="606"/>
    </location>
</feature>
<feature type="topological domain" description="Cytoplasmic" evidence="2">
    <location>
        <begin position="607"/>
        <end position="635"/>
    </location>
</feature>
<feature type="sequence conflict" description="In Ref. 3; AAN17434." evidence="5" ref="3">
    <original>F</original>
    <variation>I</variation>
    <location>
        <position position="391"/>
    </location>
</feature>